<name>RS17_MYCGE</name>
<proteinExistence type="inferred from homology"/>
<feature type="chain" id="PRO_0000128468" description="Small ribosomal subunit protein uS17">
    <location>
        <begin position="1"/>
        <end position="85"/>
    </location>
</feature>
<sequence>MKRNQRKQLIGTVVSTKNAKTATVKVTSRFKHPLYHKSVIRHKKYHVHNFGELVANDGDRVQIIETRPLSALKRWRIVKIIERAK</sequence>
<protein>
    <recommendedName>
        <fullName evidence="1">Small ribosomal subunit protein uS17</fullName>
    </recommendedName>
    <alternativeName>
        <fullName evidence="2">30S ribosomal protein S17</fullName>
    </alternativeName>
</protein>
<keyword id="KW-1185">Reference proteome</keyword>
<keyword id="KW-0687">Ribonucleoprotein</keyword>
<keyword id="KW-0689">Ribosomal protein</keyword>
<keyword id="KW-0694">RNA-binding</keyword>
<keyword id="KW-0699">rRNA-binding</keyword>
<evidence type="ECO:0000255" key="1">
    <source>
        <dbReference type="HAMAP-Rule" id="MF_01345"/>
    </source>
</evidence>
<evidence type="ECO:0000305" key="2"/>
<gene>
    <name evidence="1" type="primary">rpsQ</name>
    <name evidence="1" type="synonym">rps17</name>
    <name type="ordered locus">MG160</name>
</gene>
<dbReference type="EMBL" id="L43967">
    <property type="protein sequence ID" value="AAC71378.1"/>
    <property type="molecule type" value="Genomic_DNA"/>
</dbReference>
<dbReference type="PIR" id="G64217">
    <property type="entry name" value="G64217"/>
</dbReference>
<dbReference type="RefSeq" id="WP_009885844.1">
    <property type="nucleotide sequence ID" value="NC_000908.2"/>
</dbReference>
<dbReference type="SMR" id="P47406"/>
<dbReference type="FunCoup" id="P47406">
    <property type="interactions" value="186"/>
</dbReference>
<dbReference type="STRING" id="243273.MG_160"/>
<dbReference type="GeneID" id="88282293"/>
<dbReference type="KEGG" id="mge:MG_160"/>
<dbReference type="eggNOG" id="COG0186">
    <property type="taxonomic scope" value="Bacteria"/>
</dbReference>
<dbReference type="HOGENOM" id="CLU_073626_1_0_14"/>
<dbReference type="InParanoid" id="P47406"/>
<dbReference type="OrthoDB" id="9811714at2"/>
<dbReference type="BioCyc" id="MGEN243273:G1GJ2-184-MONOMER"/>
<dbReference type="Proteomes" id="UP000000807">
    <property type="component" value="Chromosome"/>
</dbReference>
<dbReference type="GO" id="GO:0022627">
    <property type="term" value="C:cytosolic small ribosomal subunit"/>
    <property type="evidence" value="ECO:0000318"/>
    <property type="project" value="GO_Central"/>
</dbReference>
<dbReference type="GO" id="GO:0019843">
    <property type="term" value="F:rRNA binding"/>
    <property type="evidence" value="ECO:0007669"/>
    <property type="project" value="UniProtKB-UniRule"/>
</dbReference>
<dbReference type="GO" id="GO:0003735">
    <property type="term" value="F:structural constituent of ribosome"/>
    <property type="evidence" value="ECO:0000318"/>
    <property type="project" value="GO_Central"/>
</dbReference>
<dbReference type="GO" id="GO:0006412">
    <property type="term" value="P:translation"/>
    <property type="evidence" value="ECO:0007669"/>
    <property type="project" value="UniProtKB-UniRule"/>
</dbReference>
<dbReference type="CDD" id="cd00364">
    <property type="entry name" value="Ribosomal_uS17"/>
    <property type="match status" value="1"/>
</dbReference>
<dbReference type="Gene3D" id="2.40.50.140">
    <property type="entry name" value="Nucleic acid-binding proteins"/>
    <property type="match status" value="1"/>
</dbReference>
<dbReference type="HAMAP" id="MF_01345_B">
    <property type="entry name" value="Ribosomal_uS17_B"/>
    <property type="match status" value="1"/>
</dbReference>
<dbReference type="InterPro" id="IPR012340">
    <property type="entry name" value="NA-bd_OB-fold"/>
</dbReference>
<dbReference type="InterPro" id="IPR000266">
    <property type="entry name" value="Ribosomal_uS17"/>
</dbReference>
<dbReference type="InterPro" id="IPR019984">
    <property type="entry name" value="Ribosomal_uS17_bact/chlr"/>
</dbReference>
<dbReference type="InterPro" id="IPR019979">
    <property type="entry name" value="Ribosomal_uS17_CS"/>
</dbReference>
<dbReference type="NCBIfam" id="NF004123">
    <property type="entry name" value="PRK05610.1"/>
    <property type="match status" value="1"/>
</dbReference>
<dbReference type="NCBIfam" id="TIGR03635">
    <property type="entry name" value="uS17_bact"/>
    <property type="match status" value="1"/>
</dbReference>
<dbReference type="PANTHER" id="PTHR10744">
    <property type="entry name" value="40S RIBOSOMAL PROTEIN S11 FAMILY MEMBER"/>
    <property type="match status" value="1"/>
</dbReference>
<dbReference type="PANTHER" id="PTHR10744:SF1">
    <property type="entry name" value="SMALL RIBOSOMAL SUBUNIT PROTEIN US17M"/>
    <property type="match status" value="1"/>
</dbReference>
<dbReference type="Pfam" id="PF00366">
    <property type="entry name" value="Ribosomal_S17"/>
    <property type="match status" value="1"/>
</dbReference>
<dbReference type="PRINTS" id="PR00973">
    <property type="entry name" value="RIBOSOMALS17"/>
</dbReference>
<dbReference type="SUPFAM" id="SSF50249">
    <property type="entry name" value="Nucleic acid-binding proteins"/>
    <property type="match status" value="1"/>
</dbReference>
<dbReference type="PROSITE" id="PS00056">
    <property type="entry name" value="RIBOSOMAL_S17"/>
    <property type="match status" value="1"/>
</dbReference>
<accession>P47406</accession>
<organism>
    <name type="scientific">Mycoplasma genitalium (strain ATCC 33530 / DSM 19775 / NCTC 10195 / G37)</name>
    <name type="common">Mycoplasmoides genitalium</name>
    <dbReference type="NCBI Taxonomy" id="243273"/>
    <lineage>
        <taxon>Bacteria</taxon>
        <taxon>Bacillati</taxon>
        <taxon>Mycoplasmatota</taxon>
        <taxon>Mycoplasmoidales</taxon>
        <taxon>Mycoplasmoidaceae</taxon>
        <taxon>Mycoplasmoides</taxon>
    </lineage>
</organism>
<reference key="1">
    <citation type="journal article" date="1995" name="Science">
        <title>The minimal gene complement of Mycoplasma genitalium.</title>
        <authorList>
            <person name="Fraser C.M."/>
            <person name="Gocayne J.D."/>
            <person name="White O."/>
            <person name="Adams M.D."/>
            <person name="Clayton R.A."/>
            <person name="Fleischmann R.D."/>
            <person name="Bult C.J."/>
            <person name="Kerlavage A.R."/>
            <person name="Sutton G.G."/>
            <person name="Kelley J.M."/>
            <person name="Fritchman J.L."/>
            <person name="Weidman J.F."/>
            <person name="Small K.V."/>
            <person name="Sandusky M."/>
            <person name="Fuhrmann J.L."/>
            <person name="Nguyen D.T."/>
            <person name="Utterback T.R."/>
            <person name="Saudek D.M."/>
            <person name="Phillips C.A."/>
            <person name="Merrick J.M."/>
            <person name="Tomb J.-F."/>
            <person name="Dougherty B.A."/>
            <person name="Bott K.F."/>
            <person name="Hu P.-C."/>
            <person name="Lucier T.S."/>
            <person name="Peterson S.N."/>
            <person name="Smith H.O."/>
            <person name="Hutchison C.A. III"/>
            <person name="Venter J.C."/>
        </authorList>
    </citation>
    <scope>NUCLEOTIDE SEQUENCE [LARGE SCALE GENOMIC DNA]</scope>
    <source>
        <strain>ATCC 33530 / DSM 19775 / NCTC 10195 / G37</strain>
    </source>
</reference>
<comment type="function">
    <text evidence="1">One of the primary rRNA binding proteins, it binds specifically to the 5'-end of 16S ribosomal RNA.</text>
</comment>
<comment type="subunit">
    <text evidence="1">Part of the 30S ribosomal subunit.</text>
</comment>
<comment type="similarity">
    <text evidence="1">Belongs to the universal ribosomal protein uS17 family.</text>
</comment>